<organism>
    <name type="scientific">Nicotiana sylvestris</name>
    <name type="common">Wood tobacco</name>
    <name type="synonym">South American tobacco</name>
    <dbReference type="NCBI Taxonomy" id="4096"/>
    <lineage>
        <taxon>Eukaryota</taxon>
        <taxon>Viridiplantae</taxon>
        <taxon>Streptophyta</taxon>
        <taxon>Embryophyta</taxon>
        <taxon>Tracheophyta</taxon>
        <taxon>Spermatophyta</taxon>
        <taxon>Magnoliopsida</taxon>
        <taxon>eudicotyledons</taxon>
        <taxon>Gunneridae</taxon>
        <taxon>Pentapetalae</taxon>
        <taxon>asterids</taxon>
        <taxon>lamiids</taxon>
        <taxon>Solanales</taxon>
        <taxon>Solanaceae</taxon>
        <taxon>Nicotianoideae</taxon>
        <taxon>Nicotianeae</taxon>
        <taxon>Nicotiana</taxon>
    </lineage>
</organism>
<keyword id="KW-0106">Calcium</keyword>
<keyword id="KW-1015">Disulfide bond</keyword>
<keyword id="KW-0325">Glycoprotein</keyword>
<keyword id="KW-0349">Heme</keyword>
<keyword id="KW-0376">Hydrogen peroxide</keyword>
<keyword id="KW-0408">Iron</keyword>
<keyword id="KW-0479">Metal-binding</keyword>
<keyword id="KW-0560">Oxidoreductase</keyword>
<keyword id="KW-0575">Peroxidase</keyword>
<keyword id="KW-0873">Pyrrolidone carboxylic acid</keyword>
<keyword id="KW-1185">Reference proteome</keyword>
<keyword id="KW-0964">Secreted</keyword>
<keyword id="KW-0732">Signal</keyword>
<name>PERX_NICSY</name>
<comment type="function">
    <text>Removal of H(2)O(2), oxidation of toxic reductants, biosynthesis and degradation of lignin, suberization, auxin catabolism, response to environmental stresses such as wounding, pathogen attack and oxidative stress. These functions might be dependent on each isozyme/isoform in each plant tissue.</text>
</comment>
<comment type="function">
    <text>Plays an integral role in secondary cell wall biosynthesis by the polymerization of cinnamyl alcohols into lignin and by forming rigid cross-links between cellulose, pectin, hydroxy-proline-rich glycoproteins, and lignin.</text>
</comment>
<comment type="catalytic activity">
    <reaction>
        <text>2 a phenolic donor + H2O2 = 2 a phenolic radical donor + 2 H2O</text>
        <dbReference type="Rhea" id="RHEA:56136"/>
        <dbReference type="ChEBI" id="CHEBI:15377"/>
        <dbReference type="ChEBI" id="CHEBI:16240"/>
        <dbReference type="ChEBI" id="CHEBI:139520"/>
        <dbReference type="ChEBI" id="CHEBI:139521"/>
        <dbReference type="EC" id="1.11.1.7"/>
    </reaction>
</comment>
<comment type="cofactor">
    <cofactor>
        <name>Ca(2+)</name>
        <dbReference type="ChEBI" id="CHEBI:29108"/>
    </cofactor>
    <text>Binds 2 calcium ions per subunit.</text>
</comment>
<comment type="cofactor">
    <cofactor>
        <name>heme b</name>
        <dbReference type="ChEBI" id="CHEBI:60344"/>
    </cofactor>
    <text>Binds 1 heme b (iron(II)-protoporphyrin IX) group per subunit.</text>
</comment>
<comment type="subcellular location">
    <subcellularLocation>
        <location evidence="2">Secreted</location>
    </subcellularLocation>
</comment>
<comment type="tissue specificity">
    <text>Mesophyll protoplasts and to a much lesser extent, roots and germinating seeds.</text>
</comment>
<comment type="developmental stage">
    <text>Before reinitiation of the DNA replicational activity.</text>
</comment>
<comment type="similarity">
    <text evidence="2">Belongs to the peroxidase family. Classical plant (class III) peroxidase subfamily.</text>
</comment>
<sequence>MNTPTQSFRAKAAIFSLLLLSCMQCHAQLSATFYDNTCPNALNTIRTSVRQAISSERRMAASLIRLHFHDCFVQGCDASILLDETPSIESEKTALPNLGSARGFGIIEDAKREVEKICPGVVSCADILTVAARDASAAVGGPSWTVKLGRRDSTTASKTLAETDLPGPFDPLNRLISSFASKGLSTRDMVALSGAHTIGQAQCFLFRDRIYSNGTDIDAGFASTRRRQCPQEGENGNLAPLDLVTPNQFDNNYFKNLIQKKGLLQSDQVLFNGGSTDNIVSEYSNSARAFSSDFAAAMIKMGDISPLSGQNGIIRKVCGSVN</sequence>
<reference key="1">
    <citation type="journal article" date="1992" name="Mech. Dev.">
        <title>Characterization of genes expressed in mesophyll protoplasts of Nicotiana sylvestris before the re-initiation of the DNA replicational activity.</title>
        <authorList>
            <person name="Criqui M.-C."/>
            <person name="Plesse B."/>
            <person name="Durr A."/>
            <person name="Marbach J."/>
            <person name="Parmentier Y."/>
            <person name="Jamet E."/>
            <person name="Fleck J."/>
        </authorList>
    </citation>
    <scope>NUCLEOTIDE SEQUENCE [MRNA]</scope>
    <source>
        <strain>cv. Xanthi NC</strain>
    </source>
</reference>
<evidence type="ECO:0000255" key="1"/>
<evidence type="ECO:0000255" key="2">
    <source>
        <dbReference type="PROSITE-ProRule" id="PRU00297"/>
    </source>
</evidence>
<evidence type="ECO:0000255" key="3">
    <source>
        <dbReference type="PROSITE-ProRule" id="PRU10012"/>
    </source>
</evidence>
<protein>
    <recommendedName>
        <fullName>Lignin-forming anionic peroxidase</fullName>
        <ecNumber>1.11.1.7</ecNumber>
    </recommendedName>
</protein>
<accession>Q02200</accession>
<dbReference type="EC" id="1.11.1.7"/>
<dbReference type="EMBL" id="M74103">
    <property type="protein sequence ID" value="AAA34050.1"/>
    <property type="molecule type" value="mRNA"/>
</dbReference>
<dbReference type="PIR" id="B56555">
    <property type="entry name" value="B56555"/>
</dbReference>
<dbReference type="RefSeq" id="NP_001289531.1">
    <property type="nucleotide sequence ID" value="NM_001302602.1"/>
</dbReference>
<dbReference type="SMR" id="Q02200"/>
<dbReference type="STRING" id="4096.Q02200"/>
<dbReference type="PeroxiBase" id="60">
    <property type="entry name" value="NsPrx01"/>
</dbReference>
<dbReference type="GeneID" id="104248753"/>
<dbReference type="KEGG" id="nsy:104248753"/>
<dbReference type="eggNOG" id="ENOG502QSXF">
    <property type="taxonomic scope" value="Eukaryota"/>
</dbReference>
<dbReference type="Proteomes" id="UP000189701">
    <property type="component" value="Unplaced"/>
</dbReference>
<dbReference type="GO" id="GO:0005576">
    <property type="term" value="C:extracellular region"/>
    <property type="evidence" value="ECO:0007669"/>
    <property type="project" value="UniProtKB-SubCell"/>
</dbReference>
<dbReference type="GO" id="GO:0020037">
    <property type="term" value="F:heme binding"/>
    <property type="evidence" value="ECO:0007669"/>
    <property type="project" value="InterPro"/>
</dbReference>
<dbReference type="GO" id="GO:0140825">
    <property type="term" value="F:lactoperoxidase activity"/>
    <property type="evidence" value="ECO:0007669"/>
    <property type="project" value="UniProtKB-EC"/>
</dbReference>
<dbReference type="GO" id="GO:0046872">
    <property type="term" value="F:metal ion binding"/>
    <property type="evidence" value="ECO:0007669"/>
    <property type="project" value="UniProtKB-KW"/>
</dbReference>
<dbReference type="GO" id="GO:0042744">
    <property type="term" value="P:hydrogen peroxide catabolic process"/>
    <property type="evidence" value="ECO:0007669"/>
    <property type="project" value="UniProtKB-KW"/>
</dbReference>
<dbReference type="GO" id="GO:0006979">
    <property type="term" value="P:response to oxidative stress"/>
    <property type="evidence" value="ECO:0007669"/>
    <property type="project" value="InterPro"/>
</dbReference>
<dbReference type="CDD" id="cd00693">
    <property type="entry name" value="secretory_peroxidase"/>
    <property type="match status" value="1"/>
</dbReference>
<dbReference type="FunFam" id="1.10.420.10:FF:000001">
    <property type="entry name" value="Peroxidase"/>
    <property type="match status" value="1"/>
</dbReference>
<dbReference type="FunFam" id="1.10.520.10:FF:000009">
    <property type="entry name" value="Peroxidase"/>
    <property type="match status" value="1"/>
</dbReference>
<dbReference type="Gene3D" id="1.10.520.10">
    <property type="match status" value="1"/>
</dbReference>
<dbReference type="Gene3D" id="1.10.420.10">
    <property type="entry name" value="Peroxidase, domain 2"/>
    <property type="match status" value="1"/>
</dbReference>
<dbReference type="InterPro" id="IPR002016">
    <property type="entry name" value="Haem_peroxidase"/>
</dbReference>
<dbReference type="InterPro" id="IPR010255">
    <property type="entry name" value="Haem_peroxidase_sf"/>
</dbReference>
<dbReference type="InterPro" id="IPR000823">
    <property type="entry name" value="Peroxidase_pln"/>
</dbReference>
<dbReference type="InterPro" id="IPR019794">
    <property type="entry name" value="Peroxidases_AS"/>
</dbReference>
<dbReference type="InterPro" id="IPR019793">
    <property type="entry name" value="Peroxidases_heam-ligand_BS"/>
</dbReference>
<dbReference type="InterPro" id="IPR033905">
    <property type="entry name" value="Secretory_peroxidase"/>
</dbReference>
<dbReference type="PANTHER" id="PTHR31388:SF233">
    <property type="entry name" value="PEROXIDASE"/>
    <property type="match status" value="1"/>
</dbReference>
<dbReference type="PANTHER" id="PTHR31388">
    <property type="entry name" value="PEROXIDASE 72-RELATED"/>
    <property type="match status" value="1"/>
</dbReference>
<dbReference type="Pfam" id="PF00141">
    <property type="entry name" value="peroxidase"/>
    <property type="match status" value="1"/>
</dbReference>
<dbReference type="PRINTS" id="PR00458">
    <property type="entry name" value="PEROXIDASE"/>
</dbReference>
<dbReference type="PRINTS" id="PR00461">
    <property type="entry name" value="PLPEROXIDASE"/>
</dbReference>
<dbReference type="SUPFAM" id="SSF48113">
    <property type="entry name" value="Heme-dependent peroxidases"/>
    <property type="match status" value="1"/>
</dbReference>
<dbReference type="PROSITE" id="PS00435">
    <property type="entry name" value="PEROXIDASE_1"/>
    <property type="match status" value="1"/>
</dbReference>
<dbReference type="PROSITE" id="PS00436">
    <property type="entry name" value="PEROXIDASE_2"/>
    <property type="match status" value="1"/>
</dbReference>
<dbReference type="PROSITE" id="PS50873">
    <property type="entry name" value="PEROXIDASE_4"/>
    <property type="match status" value="1"/>
</dbReference>
<proteinExistence type="evidence at transcript level"/>
<feature type="signal peptide">
    <location>
        <begin position="1"/>
        <end position="27"/>
    </location>
</feature>
<feature type="chain" id="PRO_0000023755" description="Lignin-forming anionic peroxidase">
    <location>
        <begin position="28"/>
        <end position="322"/>
    </location>
</feature>
<feature type="active site" description="Proton acceptor" evidence="2 3">
    <location>
        <position position="69"/>
    </location>
</feature>
<feature type="binding site" evidence="2">
    <location>
        <position position="70"/>
    </location>
    <ligand>
        <name>Ca(2+)</name>
        <dbReference type="ChEBI" id="CHEBI:29108"/>
        <label>1</label>
    </ligand>
</feature>
<feature type="binding site" evidence="2">
    <location>
        <position position="73"/>
    </location>
    <ligand>
        <name>Ca(2+)</name>
        <dbReference type="ChEBI" id="CHEBI:29108"/>
        <label>1</label>
    </ligand>
</feature>
<feature type="binding site" evidence="2">
    <location>
        <position position="75"/>
    </location>
    <ligand>
        <name>Ca(2+)</name>
        <dbReference type="ChEBI" id="CHEBI:29108"/>
        <label>1</label>
    </ligand>
</feature>
<feature type="binding site" evidence="2">
    <location>
        <position position="77"/>
    </location>
    <ligand>
        <name>Ca(2+)</name>
        <dbReference type="ChEBI" id="CHEBI:29108"/>
        <label>1</label>
    </ligand>
</feature>
<feature type="binding site" evidence="2">
    <location>
        <position position="79"/>
    </location>
    <ligand>
        <name>Ca(2+)</name>
        <dbReference type="ChEBI" id="CHEBI:29108"/>
        <label>1</label>
    </ligand>
</feature>
<feature type="binding site" evidence="2">
    <location>
        <position position="166"/>
    </location>
    <ligand>
        <name>substrate</name>
    </ligand>
</feature>
<feature type="binding site" description="axial binding residue" evidence="2">
    <location>
        <position position="196"/>
    </location>
    <ligand>
        <name>heme b</name>
        <dbReference type="ChEBI" id="CHEBI:60344"/>
    </ligand>
    <ligandPart>
        <name>Fe</name>
        <dbReference type="ChEBI" id="CHEBI:18248"/>
    </ligandPart>
</feature>
<feature type="binding site" evidence="2">
    <location>
        <position position="197"/>
    </location>
    <ligand>
        <name>Ca(2+)</name>
        <dbReference type="ChEBI" id="CHEBI:29108"/>
        <label>2</label>
    </ligand>
</feature>
<feature type="binding site" evidence="2">
    <location>
        <position position="242"/>
    </location>
    <ligand>
        <name>Ca(2+)</name>
        <dbReference type="ChEBI" id="CHEBI:29108"/>
        <label>2</label>
    </ligand>
</feature>
<feature type="binding site" evidence="2">
    <location>
        <position position="245"/>
    </location>
    <ligand>
        <name>Ca(2+)</name>
        <dbReference type="ChEBI" id="CHEBI:29108"/>
        <label>2</label>
    </ligand>
</feature>
<feature type="binding site" evidence="2">
    <location>
        <position position="250"/>
    </location>
    <ligand>
        <name>Ca(2+)</name>
        <dbReference type="ChEBI" id="CHEBI:29108"/>
        <label>2</label>
    </ligand>
</feature>
<feature type="site" description="Transition state stabilizer" evidence="2">
    <location>
        <position position="65"/>
    </location>
</feature>
<feature type="modified residue" description="Pyrrolidone carboxylic acid" evidence="2">
    <location>
        <position position="28"/>
    </location>
</feature>
<feature type="glycosylation site" description="N-linked (GlcNAc...) asparagine" evidence="1">
    <location>
        <position position="213"/>
    </location>
</feature>
<feature type="disulfide bond" evidence="2">
    <location>
        <begin position="38"/>
        <end position="118"/>
    </location>
</feature>
<feature type="disulfide bond" evidence="2">
    <location>
        <begin position="71"/>
        <end position="76"/>
    </location>
</feature>
<feature type="disulfide bond" evidence="2">
    <location>
        <begin position="124"/>
        <end position="318"/>
    </location>
</feature>
<feature type="disulfide bond" evidence="2">
    <location>
        <begin position="203"/>
        <end position="229"/>
    </location>
</feature>